<protein>
    <recommendedName>
        <fullName>Acyl-coenzyme A thioesterase MBLAC2</fullName>
        <shortName>Acyl-CoA thioesterase MBLAC2</shortName>
        <ecNumber evidence="2">3.1.2.2</ecNumber>
    </recommendedName>
    <alternativeName>
        <fullName>Beta-lactamase MBLAC2</fullName>
        <ecNumber evidence="2">3.5.2.6</ecNumber>
    </alternativeName>
    <alternativeName>
        <fullName>Metallo-beta-lactamase domain-containing protein 2</fullName>
    </alternativeName>
    <alternativeName>
        <fullName>Palmitoyl-coenzyme A thioesterase MBLAC2</fullName>
    </alternativeName>
</protein>
<evidence type="ECO:0000250" key="1"/>
<evidence type="ECO:0000250" key="2">
    <source>
        <dbReference type="UniProtKB" id="Q68D91"/>
    </source>
</evidence>
<evidence type="ECO:0000305" key="3"/>
<sequence>MSALEWFAHKPLGSGIFWIQERFYESGNRANIWLVRGSQRDLVIDAGLGLRSLPDYLRAAGLLAPPDGAGPRPLLAVATHVHFDHSGGLQHFEEVAVHSAEAAALLRGDNYEAVTWLSDREVTRPPRPGWRARHFCVPPVRPSRLLQEGDVISLGDRQLTVMHMPGHSRGSICLHDREHKILFSGDVVYDGSMIDWLPYSNVSDYVVSCQRLMELVDRGLVEKVLPGHFNMFGAERLYRLASNYISKAGICHKVSTCAMRSIASIALHLTNSRGTSS</sequence>
<organism>
    <name type="scientific">Gallus gallus</name>
    <name type="common">Chicken</name>
    <dbReference type="NCBI Taxonomy" id="9031"/>
    <lineage>
        <taxon>Eukaryota</taxon>
        <taxon>Metazoa</taxon>
        <taxon>Chordata</taxon>
        <taxon>Craniata</taxon>
        <taxon>Vertebrata</taxon>
        <taxon>Euteleostomi</taxon>
        <taxon>Archelosauria</taxon>
        <taxon>Archosauria</taxon>
        <taxon>Dinosauria</taxon>
        <taxon>Saurischia</taxon>
        <taxon>Theropoda</taxon>
        <taxon>Coelurosauria</taxon>
        <taxon>Aves</taxon>
        <taxon>Neognathae</taxon>
        <taxon>Galloanserae</taxon>
        <taxon>Galliformes</taxon>
        <taxon>Phasianidae</taxon>
        <taxon>Phasianinae</taxon>
        <taxon>Gallus</taxon>
    </lineage>
</organism>
<reference key="1">
    <citation type="journal article" date="2005" name="Genome Biol.">
        <title>Full-length cDNAs from chicken bursal lymphocytes to facilitate gene function analysis.</title>
        <authorList>
            <person name="Caldwell R.B."/>
            <person name="Kierzek A.M."/>
            <person name="Arakawa H."/>
            <person name="Bezzubov Y."/>
            <person name="Zaim J."/>
            <person name="Fiedler P."/>
            <person name="Kutter S."/>
            <person name="Blagodatski A."/>
            <person name="Kostovska D."/>
            <person name="Koter M."/>
            <person name="Plachy J."/>
            <person name="Carninci P."/>
            <person name="Hayashizaki Y."/>
            <person name="Buerstedde J.-M."/>
        </authorList>
    </citation>
    <scope>NUCLEOTIDE SEQUENCE [LARGE SCALE MRNA]</scope>
    <source>
        <strain>CB</strain>
        <tissue>Bursa of Fabricius</tissue>
    </source>
</reference>
<accession>Q5F336</accession>
<gene>
    <name type="primary">MBLAC2</name>
    <name type="ORF">RCJMB04_38d18</name>
</gene>
<keyword id="KW-1003">Cell membrane</keyword>
<keyword id="KW-0256">Endoplasmic reticulum</keyword>
<keyword id="KW-0276">Fatty acid metabolism</keyword>
<keyword id="KW-0378">Hydrolase</keyword>
<keyword id="KW-0443">Lipid metabolism</keyword>
<keyword id="KW-0449">Lipoprotein</keyword>
<keyword id="KW-0472">Membrane</keyword>
<keyword id="KW-0479">Metal-binding</keyword>
<keyword id="KW-0564">Palmitate</keyword>
<keyword id="KW-1185">Reference proteome</keyword>
<keyword id="KW-0862">Zinc</keyword>
<feature type="chain" id="PRO_0000325937" description="Acyl-coenzyme A thioesterase MBLAC2">
    <location>
        <begin position="1"/>
        <end position="277"/>
    </location>
</feature>
<feature type="binding site" evidence="1">
    <location>
        <position position="80"/>
    </location>
    <ligand>
        <name>Zn(2+)</name>
        <dbReference type="ChEBI" id="CHEBI:29105"/>
        <label>1</label>
    </ligand>
</feature>
<feature type="binding site" evidence="1">
    <location>
        <position position="82"/>
    </location>
    <ligand>
        <name>Zn(2+)</name>
        <dbReference type="ChEBI" id="CHEBI:29105"/>
        <label>1</label>
    </ligand>
</feature>
<feature type="binding site" evidence="2">
    <location>
        <position position="84"/>
    </location>
    <ligand>
        <name>Zn(2+)</name>
        <dbReference type="ChEBI" id="CHEBI:29105"/>
        <label>2</label>
    </ligand>
</feature>
<feature type="binding site" evidence="2">
    <location>
        <position position="85"/>
    </location>
    <ligand>
        <name>Zn(2+)</name>
        <dbReference type="ChEBI" id="CHEBI:29105"/>
        <label>2</label>
    </ligand>
</feature>
<feature type="binding site" evidence="1">
    <location>
        <position position="167"/>
    </location>
    <ligand>
        <name>Zn(2+)</name>
        <dbReference type="ChEBI" id="CHEBI:29105"/>
        <label>1</label>
    </ligand>
</feature>
<feature type="binding site" evidence="1">
    <location>
        <position position="186"/>
    </location>
    <ligand>
        <name>Zn(2+)</name>
        <dbReference type="ChEBI" id="CHEBI:29105"/>
        <label>1</label>
    </ligand>
</feature>
<feature type="binding site" evidence="1">
    <location>
        <position position="186"/>
    </location>
    <ligand>
        <name>Zn(2+)</name>
        <dbReference type="ChEBI" id="CHEBI:29105"/>
        <label>2</label>
    </ligand>
</feature>
<feature type="binding site" evidence="1">
    <location>
        <position position="228"/>
    </location>
    <ligand>
        <name>Zn(2+)</name>
        <dbReference type="ChEBI" id="CHEBI:29105"/>
        <label>2</label>
    </ligand>
</feature>
<dbReference type="EC" id="3.1.2.2" evidence="2"/>
<dbReference type="EC" id="3.5.2.6" evidence="2"/>
<dbReference type="EMBL" id="AJ851814">
    <property type="protein sequence ID" value="CAH65448.1"/>
    <property type="molecule type" value="mRNA"/>
</dbReference>
<dbReference type="RefSeq" id="NP_001026779.1">
    <property type="nucleotide sequence ID" value="NM_001031608.2"/>
</dbReference>
<dbReference type="SMR" id="Q5F336"/>
<dbReference type="FunCoup" id="Q5F336">
    <property type="interactions" value="185"/>
</dbReference>
<dbReference type="STRING" id="9031.ENSGALP00000023564"/>
<dbReference type="PaxDb" id="9031-ENSGALP00000023564"/>
<dbReference type="Ensembl" id="ENSGALT00000023610">
    <property type="protein sequence ID" value="ENSGALP00000023564"/>
    <property type="gene ID" value="ENSGALG00000014649"/>
</dbReference>
<dbReference type="Ensembl" id="ENSGALT00010030159.1">
    <property type="protein sequence ID" value="ENSGALP00010017515.1"/>
    <property type="gene ID" value="ENSGALG00010012587.1"/>
</dbReference>
<dbReference type="GeneID" id="431565"/>
<dbReference type="KEGG" id="gga:431565"/>
<dbReference type="CTD" id="153364"/>
<dbReference type="VEuPathDB" id="HostDB:geneid_431565"/>
<dbReference type="eggNOG" id="KOG0813">
    <property type="taxonomic scope" value="Eukaryota"/>
</dbReference>
<dbReference type="GeneTree" id="ENSGT00390000017819"/>
<dbReference type="HOGENOM" id="CLU_030571_0_2_1"/>
<dbReference type="InParanoid" id="Q5F336"/>
<dbReference type="OMA" id="VASHTHF"/>
<dbReference type="OrthoDB" id="17458at2759"/>
<dbReference type="PhylomeDB" id="Q5F336"/>
<dbReference type="PRO" id="PR:Q5F336"/>
<dbReference type="Proteomes" id="UP000000539">
    <property type="component" value="Chromosome Z"/>
</dbReference>
<dbReference type="GO" id="GO:0005789">
    <property type="term" value="C:endoplasmic reticulum membrane"/>
    <property type="evidence" value="ECO:0007669"/>
    <property type="project" value="UniProtKB-SubCell"/>
</dbReference>
<dbReference type="GO" id="GO:0005886">
    <property type="term" value="C:plasma membrane"/>
    <property type="evidence" value="ECO:0007669"/>
    <property type="project" value="UniProtKB-SubCell"/>
</dbReference>
<dbReference type="GO" id="GO:0008800">
    <property type="term" value="F:beta-lactamase activity"/>
    <property type="evidence" value="ECO:0000250"/>
    <property type="project" value="UniProtKB"/>
</dbReference>
<dbReference type="GO" id="GO:0052816">
    <property type="term" value="F:long-chain fatty acyl-CoA hydrolase activity"/>
    <property type="evidence" value="ECO:0007669"/>
    <property type="project" value="Ensembl"/>
</dbReference>
<dbReference type="GO" id="GO:0046872">
    <property type="term" value="F:metal ion binding"/>
    <property type="evidence" value="ECO:0007669"/>
    <property type="project" value="UniProtKB-KW"/>
</dbReference>
<dbReference type="GO" id="GO:0006631">
    <property type="term" value="P:fatty acid metabolic process"/>
    <property type="evidence" value="ECO:0007669"/>
    <property type="project" value="UniProtKB-KW"/>
</dbReference>
<dbReference type="CDD" id="cd07712">
    <property type="entry name" value="MBLAC2-like_MBL-fold"/>
    <property type="match status" value="1"/>
</dbReference>
<dbReference type="Gene3D" id="3.60.15.10">
    <property type="entry name" value="Ribonuclease Z/Hydroxyacylglutathione hydrolase-like"/>
    <property type="match status" value="1"/>
</dbReference>
<dbReference type="InterPro" id="IPR001279">
    <property type="entry name" value="Metallo-B-lactamas"/>
</dbReference>
<dbReference type="InterPro" id="IPR050855">
    <property type="entry name" value="NDM-1-like"/>
</dbReference>
<dbReference type="InterPro" id="IPR036866">
    <property type="entry name" value="RibonucZ/Hydroxyglut_hydro"/>
</dbReference>
<dbReference type="PANTHER" id="PTHR42951:SF4">
    <property type="entry name" value="ACYL-COENZYME A THIOESTERASE MBLAC2"/>
    <property type="match status" value="1"/>
</dbReference>
<dbReference type="PANTHER" id="PTHR42951">
    <property type="entry name" value="METALLO-BETA-LACTAMASE DOMAIN-CONTAINING"/>
    <property type="match status" value="1"/>
</dbReference>
<dbReference type="Pfam" id="PF00753">
    <property type="entry name" value="Lactamase_B"/>
    <property type="match status" value="1"/>
</dbReference>
<dbReference type="SMART" id="SM00849">
    <property type="entry name" value="Lactamase_B"/>
    <property type="match status" value="1"/>
</dbReference>
<dbReference type="SUPFAM" id="SSF56281">
    <property type="entry name" value="Metallo-hydrolase/oxidoreductase"/>
    <property type="match status" value="1"/>
</dbReference>
<comment type="function">
    <text evidence="2">Acyl-CoA thioesterases are a group of enzymes that catalyze the hydrolysis of acyl-CoAs to the free fatty acid and coenzyme A (CoASH), providing the potential to regulate intracellular levels of acyl-CoAs, free fatty acids and CoASH. Has an acyl-CoA thioesterase activity towards the long chain fatty acyl-CoA thioester palmitoyl-CoA (hexadecanoyl-CoA; C16:0-CoA). Displays a substrate preference for fatty acyl-CoAs with chain-lengths C12-C18.</text>
</comment>
<comment type="catalytic activity">
    <reaction evidence="2">
        <text>hexadecanoyl-CoA + H2O = hexadecanoate + CoA + H(+)</text>
        <dbReference type="Rhea" id="RHEA:16645"/>
        <dbReference type="ChEBI" id="CHEBI:7896"/>
        <dbReference type="ChEBI" id="CHEBI:15377"/>
        <dbReference type="ChEBI" id="CHEBI:15378"/>
        <dbReference type="ChEBI" id="CHEBI:57287"/>
        <dbReference type="ChEBI" id="CHEBI:57379"/>
        <dbReference type="EC" id="3.1.2.2"/>
    </reaction>
</comment>
<comment type="catalytic activity">
    <reaction evidence="2">
        <text>dodecanoyl-CoA + H2O = dodecanoate + CoA + H(+)</text>
        <dbReference type="Rhea" id="RHEA:30135"/>
        <dbReference type="ChEBI" id="CHEBI:15377"/>
        <dbReference type="ChEBI" id="CHEBI:15378"/>
        <dbReference type="ChEBI" id="CHEBI:18262"/>
        <dbReference type="ChEBI" id="CHEBI:57287"/>
        <dbReference type="ChEBI" id="CHEBI:57375"/>
    </reaction>
    <physiologicalReaction direction="left-to-right" evidence="2">
        <dbReference type="Rhea" id="RHEA:30136"/>
    </physiologicalReaction>
</comment>
<comment type="catalytic activity">
    <reaction evidence="2">
        <text>tetradecanoyl-CoA + H2O = tetradecanoate + CoA + H(+)</text>
        <dbReference type="Rhea" id="RHEA:40119"/>
        <dbReference type="ChEBI" id="CHEBI:15377"/>
        <dbReference type="ChEBI" id="CHEBI:15378"/>
        <dbReference type="ChEBI" id="CHEBI:30807"/>
        <dbReference type="ChEBI" id="CHEBI:57287"/>
        <dbReference type="ChEBI" id="CHEBI:57385"/>
    </reaction>
    <physiologicalReaction direction="left-to-right" evidence="2">
        <dbReference type="Rhea" id="RHEA:40120"/>
    </physiologicalReaction>
</comment>
<comment type="catalytic activity">
    <reaction evidence="2">
        <text>octadecanoyl-CoA + H2O = octadecanoate + CoA + H(+)</text>
        <dbReference type="Rhea" id="RHEA:30139"/>
        <dbReference type="ChEBI" id="CHEBI:15377"/>
        <dbReference type="ChEBI" id="CHEBI:15378"/>
        <dbReference type="ChEBI" id="CHEBI:25629"/>
        <dbReference type="ChEBI" id="CHEBI:57287"/>
        <dbReference type="ChEBI" id="CHEBI:57394"/>
    </reaction>
    <physiologicalReaction direction="left-to-right" evidence="2">
        <dbReference type="Rhea" id="RHEA:30140"/>
    </physiologicalReaction>
</comment>
<comment type="catalytic activity">
    <reaction evidence="2">
        <text>a beta-lactam + H2O = a substituted beta-amino acid</text>
        <dbReference type="Rhea" id="RHEA:20401"/>
        <dbReference type="ChEBI" id="CHEBI:15377"/>
        <dbReference type="ChEBI" id="CHEBI:35627"/>
        <dbReference type="ChEBI" id="CHEBI:140347"/>
        <dbReference type="EC" id="3.5.2.6"/>
    </reaction>
</comment>
<comment type="cofactor">
    <cofactor evidence="2">
        <name>Zn(2+)</name>
        <dbReference type="ChEBI" id="CHEBI:29105"/>
    </cofactor>
    <text evidence="2">Binds 2 Zn(2+) ions per subunit.</text>
</comment>
<comment type="subcellular location">
    <subcellularLocation>
        <location evidence="2">Endoplasmic reticulum membrane</location>
        <topology evidence="2">Lipid-anchor</topology>
    </subcellularLocation>
    <subcellularLocation>
        <location evidence="2">Cell membrane</location>
        <topology evidence="2">Lipid-anchor</topology>
    </subcellularLocation>
</comment>
<comment type="similarity">
    <text evidence="3">Belongs to the metallo-beta-lactamase superfamily. Glyoxalase II family.</text>
</comment>
<proteinExistence type="evidence at transcript level"/>
<name>MBLC2_CHICK</name>